<organism>
    <name type="scientific">Synechococcus sp. (strain ATCC 27144 / PCC 6301 / SAUG 1402/1)</name>
    <name type="common">Anacystis nidulans</name>
    <dbReference type="NCBI Taxonomy" id="269084"/>
    <lineage>
        <taxon>Bacteria</taxon>
        <taxon>Bacillati</taxon>
        <taxon>Cyanobacteriota</taxon>
        <taxon>Cyanophyceae</taxon>
        <taxon>Synechococcales</taxon>
        <taxon>Synechococcaceae</taxon>
        <taxon>Synechococcus</taxon>
    </lineage>
</organism>
<proteinExistence type="inferred from homology"/>
<sequence length="249" mass="27791">MPTLLELSSVLPLAELEVGQHFYWQIGNYRLHGQVFLTSWFVIAALVVLSLLANRNLQRIPSGLQNFMEYVLDFIRNLARTQIGEKEYRPWVPFIGTLFLFIFLSNWSGALIPWKLIKLPSGELAAPTSDINTTVALALLTSLAYFYAGFSRKGLGYFGNYVHPTPVMLPFKILEDFTKPLSLSFRLFGNILADELVVAVLVLLVPLFVPLPAMILGLFTSAIQALIFATLAASYIGEAVEEHGEEHAE</sequence>
<accession>P08444</accession>
<name>ATP6_SYNP6</name>
<feature type="chain" id="PRO_0000082075" description="ATP synthase subunit a">
    <location>
        <begin position="1"/>
        <end position="249"/>
    </location>
</feature>
<feature type="transmembrane region" description="Helical" evidence="1">
    <location>
        <begin position="33"/>
        <end position="53"/>
    </location>
</feature>
<feature type="transmembrane region" description="Helical" evidence="1">
    <location>
        <begin position="92"/>
        <end position="112"/>
    </location>
</feature>
<feature type="transmembrane region" description="Helical" evidence="1">
    <location>
        <begin position="131"/>
        <end position="151"/>
    </location>
</feature>
<feature type="transmembrane region" description="Helical" evidence="1">
    <location>
        <begin position="196"/>
        <end position="216"/>
    </location>
</feature>
<feature type="transmembrane region" description="Helical" evidence="1">
    <location>
        <begin position="217"/>
        <end position="237"/>
    </location>
</feature>
<gene>
    <name evidence="1" type="primary">atpB</name>
    <name evidence="1" type="synonym">atpI</name>
    <name type="ordered locus">syc1182_c</name>
</gene>
<dbReference type="EMBL" id="X05302">
    <property type="protein sequence ID" value="CAA28923.1"/>
    <property type="status" value="ALT_INIT"/>
    <property type="molecule type" value="Genomic_DNA"/>
</dbReference>
<dbReference type="EMBL" id="AP008231">
    <property type="protein sequence ID" value="BAD79372.1"/>
    <property type="status" value="ALT_INIT"/>
    <property type="molecule type" value="Genomic_DNA"/>
</dbReference>
<dbReference type="PIR" id="S10826">
    <property type="entry name" value="PWYCA6"/>
</dbReference>
<dbReference type="SMR" id="P08444"/>
<dbReference type="KEGG" id="syc:syc1182_c"/>
<dbReference type="eggNOG" id="COG0356">
    <property type="taxonomic scope" value="Bacteria"/>
</dbReference>
<dbReference type="Proteomes" id="UP000001175">
    <property type="component" value="Chromosome"/>
</dbReference>
<dbReference type="GO" id="GO:0031676">
    <property type="term" value="C:plasma membrane-derived thylakoid membrane"/>
    <property type="evidence" value="ECO:0007669"/>
    <property type="project" value="UniProtKB-SubCell"/>
</dbReference>
<dbReference type="GO" id="GO:0045259">
    <property type="term" value="C:proton-transporting ATP synthase complex"/>
    <property type="evidence" value="ECO:0007669"/>
    <property type="project" value="UniProtKB-KW"/>
</dbReference>
<dbReference type="GO" id="GO:0046933">
    <property type="term" value="F:proton-transporting ATP synthase activity, rotational mechanism"/>
    <property type="evidence" value="ECO:0007669"/>
    <property type="project" value="UniProtKB-UniRule"/>
</dbReference>
<dbReference type="CDD" id="cd00310">
    <property type="entry name" value="ATP-synt_Fo_a_6"/>
    <property type="match status" value="1"/>
</dbReference>
<dbReference type="FunFam" id="1.20.120.220:FF:000001">
    <property type="entry name" value="ATP synthase subunit a, chloroplastic"/>
    <property type="match status" value="1"/>
</dbReference>
<dbReference type="Gene3D" id="1.20.120.220">
    <property type="entry name" value="ATP synthase, F0 complex, subunit A"/>
    <property type="match status" value="1"/>
</dbReference>
<dbReference type="HAMAP" id="MF_01393">
    <property type="entry name" value="ATP_synth_a_bact"/>
    <property type="match status" value="1"/>
</dbReference>
<dbReference type="InterPro" id="IPR045082">
    <property type="entry name" value="ATP_syn_F0_a_bact/chloroplast"/>
</dbReference>
<dbReference type="InterPro" id="IPR000568">
    <property type="entry name" value="ATP_synth_F0_asu"/>
</dbReference>
<dbReference type="InterPro" id="IPR023011">
    <property type="entry name" value="ATP_synth_F0_asu_AS"/>
</dbReference>
<dbReference type="InterPro" id="IPR035908">
    <property type="entry name" value="F0_ATP_A_sf"/>
</dbReference>
<dbReference type="NCBIfam" id="TIGR01131">
    <property type="entry name" value="ATP_synt_6_or_A"/>
    <property type="match status" value="1"/>
</dbReference>
<dbReference type="PANTHER" id="PTHR42823">
    <property type="entry name" value="ATP SYNTHASE SUBUNIT A, CHLOROPLASTIC"/>
    <property type="match status" value="1"/>
</dbReference>
<dbReference type="PANTHER" id="PTHR42823:SF3">
    <property type="entry name" value="ATP SYNTHASE SUBUNIT A, CHLOROPLASTIC"/>
    <property type="match status" value="1"/>
</dbReference>
<dbReference type="Pfam" id="PF00119">
    <property type="entry name" value="ATP-synt_A"/>
    <property type="match status" value="1"/>
</dbReference>
<dbReference type="PRINTS" id="PR00123">
    <property type="entry name" value="ATPASEA"/>
</dbReference>
<dbReference type="SUPFAM" id="SSF81336">
    <property type="entry name" value="F1F0 ATP synthase subunit A"/>
    <property type="match status" value="1"/>
</dbReference>
<dbReference type="PROSITE" id="PS00449">
    <property type="entry name" value="ATPASE_A"/>
    <property type="match status" value="1"/>
</dbReference>
<comment type="function">
    <text evidence="1">Key component of the proton channel; it plays a direct role in the translocation of protons across the membrane.</text>
</comment>
<comment type="subunit">
    <text evidence="1">F-type ATPases have 2 components, CF(1) - the catalytic core - and CF(0) - the membrane proton channel. CF(1) has five subunits: alpha(3), beta(3), gamma(1), delta(1), epsilon(1). CF(0) has four main subunits: a, b, b' and c.</text>
</comment>
<comment type="subcellular location">
    <subcellularLocation>
        <location evidence="1">Cellular thylakoid membrane</location>
        <topology evidence="1">Multi-pass membrane protein</topology>
    </subcellularLocation>
</comment>
<comment type="similarity">
    <text evidence="1">Belongs to the ATPase A chain family.</text>
</comment>
<comment type="sequence caution" evidence="2">
    <conflict type="erroneous initiation">
        <sequence resource="EMBL-CDS" id="BAD79372"/>
    </conflict>
</comment>
<comment type="sequence caution" evidence="2">
    <conflict type="erroneous initiation">
        <sequence resource="EMBL-CDS" id="CAA28923"/>
    </conflict>
</comment>
<protein>
    <recommendedName>
        <fullName evidence="1">ATP synthase subunit a</fullName>
    </recommendedName>
    <alternativeName>
        <fullName evidence="1">ATP synthase F0 sector subunit a</fullName>
    </alternativeName>
    <alternativeName>
        <fullName evidence="1">F-ATPase subunit 6</fullName>
    </alternativeName>
</protein>
<keyword id="KW-0066">ATP synthesis</keyword>
<keyword id="KW-0138">CF(0)</keyword>
<keyword id="KW-0375">Hydrogen ion transport</keyword>
<keyword id="KW-0406">Ion transport</keyword>
<keyword id="KW-0472">Membrane</keyword>
<keyword id="KW-0793">Thylakoid</keyword>
<keyword id="KW-0812">Transmembrane</keyword>
<keyword id="KW-1133">Transmembrane helix</keyword>
<keyword id="KW-0813">Transport</keyword>
<reference key="1">
    <citation type="journal article" date="1987" name="J. Mol. Biol.">
        <title>The organization and sequence of the genes for ATP synthase subunits in the cyanobacterium Synechococcus 6301. Support for an endosymbiotic origin of chloroplasts.</title>
        <authorList>
            <person name="Cozens A.L."/>
            <person name="Walker J.E."/>
        </authorList>
    </citation>
    <scope>NUCLEOTIDE SEQUENCE [GENOMIC DNA]</scope>
</reference>
<reference key="2">
    <citation type="journal article" date="2007" name="Photosyn. Res.">
        <title>Complete nucleotide sequence of the freshwater unicellular cyanobacterium Synechococcus elongatus PCC 6301 chromosome: gene content and organization.</title>
        <authorList>
            <person name="Sugita C."/>
            <person name="Ogata K."/>
            <person name="Shikata M."/>
            <person name="Jikuya H."/>
            <person name="Takano J."/>
            <person name="Furumichi M."/>
            <person name="Kanehisa M."/>
            <person name="Omata T."/>
            <person name="Sugiura M."/>
            <person name="Sugita M."/>
        </authorList>
    </citation>
    <scope>NUCLEOTIDE SEQUENCE [LARGE SCALE GENOMIC DNA]</scope>
    <source>
        <strain>ATCC 27144 / PCC 6301 / SAUG 1402/1</strain>
    </source>
</reference>
<evidence type="ECO:0000255" key="1">
    <source>
        <dbReference type="HAMAP-Rule" id="MF_01393"/>
    </source>
</evidence>
<evidence type="ECO:0000305" key="2"/>